<name>YNEE_ECO57</name>
<feature type="chain" id="PRO_0000217664" description="Voltage-dependent anion channel-forming protein YneE">
    <location>
        <begin position="1"/>
        <end position="304"/>
    </location>
</feature>
<feature type="transmembrane region" description="Helical" evidence="1">
    <location>
        <begin position="28"/>
        <end position="48"/>
    </location>
</feature>
<feature type="transmembrane region" description="Helical" evidence="1">
    <location>
        <begin position="50"/>
        <end position="70"/>
    </location>
</feature>
<feature type="transmembrane region" description="Helical" evidence="1">
    <location>
        <begin position="194"/>
        <end position="214"/>
    </location>
</feature>
<feature type="transmembrane region" description="Helical" evidence="1">
    <location>
        <begin position="220"/>
        <end position="240"/>
    </location>
</feature>
<keyword id="KW-1003">Cell membrane</keyword>
<keyword id="KW-0406">Ion transport</keyword>
<keyword id="KW-0472">Membrane</keyword>
<keyword id="KW-1185">Reference proteome</keyword>
<keyword id="KW-0812">Transmembrane</keyword>
<keyword id="KW-1133">Transmembrane helix</keyword>
<keyword id="KW-0813">Transport</keyword>
<evidence type="ECO:0000255" key="1"/>
<evidence type="ECO:0000305" key="2"/>
<organism>
    <name type="scientific">Escherichia coli O157:H7</name>
    <dbReference type="NCBI Taxonomy" id="83334"/>
    <lineage>
        <taxon>Bacteria</taxon>
        <taxon>Pseudomonadati</taxon>
        <taxon>Pseudomonadota</taxon>
        <taxon>Gammaproteobacteria</taxon>
        <taxon>Enterobacterales</taxon>
        <taxon>Enterobacteriaceae</taxon>
        <taxon>Escherichia</taxon>
    </lineage>
</organism>
<protein>
    <recommendedName>
        <fullName>Voltage-dependent anion channel-forming protein YneE</fullName>
    </recommendedName>
</protein>
<sequence>MIVRPQQHWLRRIFVWHGSVLSKISSRLLLNFLFSIAVIFMLPWYTHLGIKFTLAPFSILGVAIAIFLGFRNNAGYARYVEARKLWGQLMIASRSLLREVKTTLPDSASVREFARLQIAFAHCLRMTLRKQPQVEVLAHYLKTEDLQRVLASNSPANRILLIMGEWLAVQRRNGQLSDILFISLNDRLNDISAVLAGCERIAYTPIPFAYTLILHRTVYLFCIMLPFALVVDLHYMTPFISVLISYTFISLDCLAEELEDPFGTENNDLPLDAICNAIEIDLLQMNDEAEIPAKVLPDRHYQLT</sequence>
<gene>
    <name type="primary">yneE</name>
    <name type="ordered locus">Z2185</name>
    <name type="ordered locus">ECs2127</name>
</gene>
<dbReference type="EMBL" id="AE005174">
    <property type="protein sequence ID" value="AAG56246.1"/>
    <property type="status" value="ALT_INIT"/>
    <property type="molecule type" value="Genomic_DNA"/>
</dbReference>
<dbReference type="EMBL" id="BA000007">
    <property type="protein sequence ID" value="BAB35550.2"/>
    <property type="molecule type" value="Genomic_DNA"/>
</dbReference>
<dbReference type="PIR" id="B85723">
    <property type="entry name" value="B85723"/>
</dbReference>
<dbReference type="PIR" id="G90894">
    <property type="entry name" value="G90894"/>
</dbReference>
<dbReference type="RefSeq" id="NP_310154.2">
    <property type="nucleotide sequence ID" value="NC_002695.1"/>
</dbReference>
<dbReference type="RefSeq" id="WP_001302151.1">
    <property type="nucleotide sequence ID" value="NZ_VOAI01000024.1"/>
</dbReference>
<dbReference type="SMR" id="Q8XAZ3"/>
<dbReference type="STRING" id="155864.Z2185"/>
<dbReference type="GeneID" id="917350"/>
<dbReference type="KEGG" id="ece:Z2185"/>
<dbReference type="KEGG" id="ecs:ECs_2127"/>
<dbReference type="PATRIC" id="fig|386585.9.peg.2233"/>
<dbReference type="eggNOG" id="COG3781">
    <property type="taxonomic scope" value="Bacteria"/>
</dbReference>
<dbReference type="HOGENOM" id="CLU_029790_4_2_6"/>
<dbReference type="OMA" id="AYSVMIH"/>
<dbReference type="Proteomes" id="UP000000558">
    <property type="component" value="Chromosome"/>
</dbReference>
<dbReference type="Proteomes" id="UP000002519">
    <property type="component" value="Chromosome"/>
</dbReference>
<dbReference type="GO" id="GO:0005886">
    <property type="term" value="C:plasma membrane"/>
    <property type="evidence" value="ECO:0007669"/>
    <property type="project" value="UniProtKB-SubCell"/>
</dbReference>
<dbReference type="GO" id="GO:0005254">
    <property type="term" value="F:chloride channel activity"/>
    <property type="evidence" value="ECO:0007669"/>
    <property type="project" value="InterPro"/>
</dbReference>
<dbReference type="InterPro" id="IPR021134">
    <property type="entry name" value="Bestrophin-like"/>
</dbReference>
<dbReference type="InterPro" id="IPR044669">
    <property type="entry name" value="YneE/VCCN1/2-like"/>
</dbReference>
<dbReference type="PANTHER" id="PTHR33281">
    <property type="entry name" value="UPF0187 PROTEIN YNEE"/>
    <property type="match status" value="1"/>
</dbReference>
<dbReference type="PANTHER" id="PTHR33281:SF19">
    <property type="entry name" value="VOLTAGE-DEPENDENT ANION CHANNEL-FORMING PROTEIN YNEE"/>
    <property type="match status" value="1"/>
</dbReference>
<dbReference type="Pfam" id="PF01062">
    <property type="entry name" value="Bestrophin"/>
    <property type="match status" value="1"/>
</dbReference>
<accession>Q8XAZ3</accession>
<reference key="1">
    <citation type="journal article" date="2001" name="Nature">
        <title>Genome sequence of enterohaemorrhagic Escherichia coli O157:H7.</title>
        <authorList>
            <person name="Perna N.T."/>
            <person name="Plunkett G. III"/>
            <person name="Burland V."/>
            <person name="Mau B."/>
            <person name="Glasner J.D."/>
            <person name="Rose D.J."/>
            <person name="Mayhew G.F."/>
            <person name="Evans P.S."/>
            <person name="Gregor J."/>
            <person name="Kirkpatrick H.A."/>
            <person name="Posfai G."/>
            <person name="Hackett J."/>
            <person name="Klink S."/>
            <person name="Boutin A."/>
            <person name="Shao Y."/>
            <person name="Miller L."/>
            <person name="Grotbeck E.J."/>
            <person name="Davis N.W."/>
            <person name="Lim A."/>
            <person name="Dimalanta E.T."/>
            <person name="Potamousis K."/>
            <person name="Apodaca J."/>
            <person name="Anantharaman T.S."/>
            <person name="Lin J."/>
            <person name="Yen G."/>
            <person name="Schwartz D.C."/>
            <person name="Welch R.A."/>
            <person name="Blattner F.R."/>
        </authorList>
    </citation>
    <scope>NUCLEOTIDE SEQUENCE [LARGE SCALE GENOMIC DNA]</scope>
    <source>
        <strain>O157:H7 / EDL933 / ATCC 700927 / EHEC</strain>
    </source>
</reference>
<reference key="2">
    <citation type="journal article" date="2001" name="DNA Res.">
        <title>Complete genome sequence of enterohemorrhagic Escherichia coli O157:H7 and genomic comparison with a laboratory strain K-12.</title>
        <authorList>
            <person name="Hayashi T."/>
            <person name="Makino K."/>
            <person name="Ohnishi M."/>
            <person name="Kurokawa K."/>
            <person name="Ishii K."/>
            <person name="Yokoyama K."/>
            <person name="Han C.-G."/>
            <person name="Ohtsubo E."/>
            <person name="Nakayama K."/>
            <person name="Murata T."/>
            <person name="Tanaka M."/>
            <person name="Tobe T."/>
            <person name="Iida T."/>
            <person name="Takami H."/>
            <person name="Honda T."/>
            <person name="Sasakawa C."/>
            <person name="Ogasawara N."/>
            <person name="Yasunaga T."/>
            <person name="Kuhara S."/>
            <person name="Shiba T."/>
            <person name="Hattori M."/>
            <person name="Shinagawa H."/>
        </authorList>
    </citation>
    <scope>NUCLEOTIDE SEQUENCE [LARGE SCALE GENOMIC DNA]</scope>
    <source>
        <strain>O157:H7 / Sakai / RIMD 0509952 / EHEC</strain>
    </source>
</reference>
<comment type="subcellular location">
    <subcellularLocation>
        <location evidence="1">Cell membrane</location>
        <topology evidence="1">Multi-pass membrane protein</topology>
    </subcellularLocation>
</comment>
<comment type="similarity">
    <text evidence="2">Belongs to the anion channel-forming bestrophin (TC 1.A.46) family.</text>
</comment>
<comment type="sequence caution" evidence="2">
    <conflict type="erroneous initiation">
        <sequence resource="EMBL-CDS" id="AAG56246"/>
    </conflict>
    <text>Extended N-terminus.</text>
</comment>
<proteinExistence type="inferred from homology"/>